<comment type="function">
    <text evidence="1">F(1)F(0) ATP synthase produces ATP from ADP in the presence of a proton or sodium gradient. F-type ATPases consist of two structural domains, F(1) containing the extramembraneous catalytic core and F(0) containing the membrane proton channel, linked together by a central stalk and a peripheral stalk. During catalysis, ATP synthesis in the catalytic domain of F(1) is coupled via a rotary mechanism of the central stalk subunits to proton translocation.</text>
</comment>
<comment type="function">
    <text evidence="1">Component of the F(0) channel, it forms part of the peripheral stalk, linking F(1) to F(0).</text>
</comment>
<comment type="subunit">
    <text evidence="1">F-type ATPases have 2 components, F(1) - the catalytic core - and F(0) - the membrane proton channel. F(1) has five subunits: alpha(3), beta(3), gamma(1), delta(1), epsilon(1). F(0) has three main subunits: a(1), b(2) and c(10-14). The alpha and beta chains form an alternating ring which encloses part of the gamma chain. F(1) is attached to F(0) by a central stalk formed by the gamma and epsilon chains, while a peripheral stalk is formed by the delta and b chains.</text>
</comment>
<comment type="subcellular location">
    <subcellularLocation>
        <location evidence="1">Cell inner membrane</location>
        <topology evidence="1">Single-pass membrane protein</topology>
    </subcellularLocation>
</comment>
<comment type="similarity">
    <text evidence="1">Belongs to the ATPase B chain family.</text>
</comment>
<accession>B1XSD0</accession>
<sequence length="156" mass="17213">MNLNATLFAQMIVFFVLWWVVARFVWPPLVKALDERSSKIADGLAAAERGKEALALASNEAEQELNKARQEGVQRVAEAEKRAQMSAEEIRANAQAEAARVISQAQQDAAQQVTRAREVLRAEVAVLAVKGAEQILRREVDAKAHGQLLDQLKAEL</sequence>
<keyword id="KW-0066">ATP synthesis</keyword>
<keyword id="KW-0997">Cell inner membrane</keyword>
<keyword id="KW-1003">Cell membrane</keyword>
<keyword id="KW-0138">CF(0)</keyword>
<keyword id="KW-0375">Hydrogen ion transport</keyword>
<keyword id="KW-0406">Ion transport</keyword>
<keyword id="KW-0472">Membrane</keyword>
<keyword id="KW-0812">Transmembrane</keyword>
<keyword id="KW-1133">Transmembrane helix</keyword>
<keyword id="KW-0813">Transport</keyword>
<evidence type="ECO:0000255" key="1">
    <source>
        <dbReference type="HAMAP-Rule" id="MF_01398"/>
    </source>
</evidence>
<reference key="1">
    <citation type="journal article" date="2013" name="Proc. Natl. Acad. Sci. U.S.A.">
        <title>Polynucleobacter necessarius, a model for genome reduction in both free-living and symbiotic bacteria.</title>
        <authorList>
            <person name="Boscaro V."/>
            <person name="Felletti M."/>
            <person name="Vannini C."/>
            <person name="Ackerman M.S."/>
            <person name="Chain P.S."/>
            <person name="Malfatti S."/>
            <person name="Vergez L.M."/>
            <person name="Shin M."/>
            <person name="Doak T.G."/>
            <person name="Lynch M."/>
            <person name="Petroni G."/>
        </authorList>
    </citation>
    <scope>NUCLEOTIDE SEQUENCE [LARGE SCALE GENOMIC DNA]</scope>
    <source>
        <strain>STIR1</strain>
    </source>
</reference>
<name>ATPF_POLNS</name>
<protein>
    <recommendedName>
        <fullName evidence="1">ATP synthase subunit b</fullName>
    </recommendedName>
    <alternativeName>
        <fullName evidence="1">ATP synthase F(0) sector subunit b</fullName>
    </alternativeName>
    <alternativeName>
        <fullName evidence="1">ATPase subunit I</fullName>
    </alternativeName>
    <alternativeName>
        <fullName evidence="1">F-type ATPase subunit b</fullName>
        <shortName evidence="1">F-ATPase subunit b</shortName>
    </alternativeName>
</protein>
<proteinExistence type="inferred from homology"/>
<feature type="chain" id="PRO_0000368660" description="ATP synthase subunit b">
    <location>
        <begin position="1"/>
        <end position="156"/>
    </location>
</feature>
<feature type="transmembrane region" description="Helical" evidence="1">
    <location>
        <begin position="7"/>
        <end position="27"/>
    </location>
</feature>
<gene>
    <name evidence="1" type="primary">atpF</name>
    <name type="ordered locus">Pnec_0018</name>
</gene>
<organism>
    <name type="scientific">Polynucleobacter necessarius subsp. necessarius (strain STIR1)</name>
    <dbReference type="NCBI Taxonomy" id="452638"/>
    <lineage>
        <taxon>Bacteria</taxon>
        <taxon>Pseudomonadati</taxon>
        <taxon>Pseudomonadota</taxon>
        <taxon>Betaproteobacteria</taxon>
        <taxon>Burkholderiales</taxon>
        <taxon>Burkholderiaceae</taxon>
        <taxon>Polynucleobacter</taxon>
    </lineage>
</organism>
<dbReference type="EMBL" id="CP001010">
    <property type="protein sequence ID" value="ACB43348.1"/>
    <property type="molecule type" value="Genomic_DNA"/>
</dbReference>
<dbReference type="SMR" id="B1XSD0"/>
<dbReference type="STRING" id="452638.Pnec_0018"/>
<dbReference type="KEGG" id="pne:Pnec_0018"/>
<dbReference type="eggNOG" id="COG0711">
    <property type="taxonomic scope" value="Bacteria"/>
</dbReference>
<dbReference type="HOGENOM" id="CLU_079215_4_5_4"/>
<dbReference type="OrthoDB" id="9788020at2"/>
<dbReference type="GO" id="GO:0005886">
    <property type="term" value="C:plasma membrane"/>
    <property type="evidence" value="ECO:0007669"/>
    <property type="project" value="UniProtKB-SubCell"/>
</dbReference>
<dbReference type="GO" id="GO:0045259">
    <property type="term" value="C:proton-transporting ATP synthase complex"/>
    <property type="evidence" value="ECO:0007669"/>
    <property type="project" value="UniProtKB-KW"/>
</dbReference>
<dbReference type="GO" id="GO:0046933">
    <property type="term" value="F:proton-transporting ATP synthase activity, rotational mechanism"/>
    <property type="evidence" value="ECO:0007669"/>
    <property type="project" value="UniProtKB-UniRule"/>
</dbReference>
<dbReference type="GO" id="GO:0046961">
    <property type="term" value="F:proton-transporting ATPase activity, rotational mechanism"/>
    <property type="evidence" value="ECO:0007669"/>
    <property type="project" value="TreeGrafter"/>
</dbReference>
<dbReference type="CDD" id="cd06503">
    <property type="entry name" value="ATP-synt_Fo_b"/>
    <property type="match status" value="1"/>
</dbReference>
<dbReference type="Gene3D" id="6.10.250.1580">
    <property type="match status" value="1"/>
</dbReference>
<dbReference type="HAMAP" id="MF_01398">
    <property type="entry name" value="ATP_synth_b_bprime"/>
    <property type="match status" value="1"/>
</dbReference>
<dbReference type="InterPro" id="IPR028987">
    <property type="entry name" value="ATP_synth_B-like_membr_sf"/>
</dbReference>
<dbReference type="InterPro" id="IPR002146">
    <property type="entry name" value="ATP_synth_b/b'su_bac/chlpt"/>
</dbReference>
<dbReference type="InterPro" id="IPR005864">
    <property type="entry name" value="ATP_synth_F0_bsu_bac"/>
</dbReference>
<dbReference type="InterPro" id="IPR050059">
    <property type="entry name" value="ATP_synthase_B_chain"/>
</dbReference>
<dbReference type="NCBIfam" id="TIGR01144">
    <property type="entry name" value="ATP_synt_b"/>
    <property type="match status" value="1"/>
</dbReference>
<dbReference type="NCBIfam" id="NF004411">
    <property type="entry name" value="PRK05759.1-2"/>
    <property type="match status" value="1"/>
</dbReference>
<dbReference type="PANTHER" id="PTHR33445:SF1">
    <property type="entry name" value="ATP SYNTHASE SUBUNIT B"/>
    <property type="match status" value="1"/>
</dbReference>
<dbReference type="PANTHER" id="PTHR33445">
    <property type="entry name" value="ATP SYNTHASE SUBUNIT B', CHLOROPLASTIC"/>
    <property type="match status" value="1"/>
</dbReference>
<dbReference type="Pfam" id="PF00430">
    <property type="entry name" value="ATP-synt_B"/>
    <property type="match status" value="1"/>
</dbReference>
<dbReference type="SUPFAM" id="SSF81573">
    <property type="entry name" value="F1F0 ATP synthase subunit B, membrane domain"/>
    <property type="match status" value="1"/>
</dbReference>